<organism>
    <name type="scientific">Oryza sativa subsp. indica</name>
    <name type="common">Rice</name>
    <dbReference type="NCBI Taxonomy" id="39946"/>
    <lineage>
        <taxon>Eukaryota</taxon>
        <taxon>Viridiplantae</taxon>
        <taxon>Streptophyta</taxon>
        <taxon>Embryophyta</taxon>
        <taxon>Tracheophyta</taxon>
        <taxon>Spermatophyta</taxon>
        <taxon>Magnoliopsida</taxon>
        <taxon>Liliopsida</taxon>
        <taxon>Poales</taxon>
        <taxon>Poaceae</taxon>
        <taxon>BOP clade</taxon>
        <taxon>Oryzoideae</taxon>
        <taxon>Oryzeae</taxon>
        <taxon>Oryzinae</taxon>
        <taxon>Oryza</taxon>
        <taxon>Oryza sativa</taxon>
    </lineage>
</organism>
<comment type="function">
    <text evidence="1">Probable transcription factor.</text>
</comment>
<comment type="subcellular location">
    <subcellularLocation>
        <location evidence="5">Nucleus</location>
    </subcellularLocation>
</comment>
<comment type="tissue specificity">
    <text evidence="4">Expressed in seedlings, roots, stems and panicles.</text>
</comment>
<comment type="similarity">
    <text evidence="5">Belongs to the HD-ZIP homeobox family. Class II subfamily.</text>
</comment>
<name>HOX28_ORYSI</name>
<accession>A2Y931</accession>
<accession>A5JPW4</accession>
<accession>B8B2B5</accession>
<reference key="1">
    <citation type="journal article" date="2005" name="PLoS Biol.">
        <title>The genomes of Oryza sativa: a history of duplications.</title>
        <authorList>
            <person name="Yu J."/>
            <person name="Wang J."/>
            <person name="Lin W."/>
            <person name="Li S."/>
            <person name="Li H."/>
            <person name="Zhou J."/>
            <person name="Ni P."/>
            <person name="Dong W."/>
            <person name="Hu S."/>
            <person name="Zeng C."/>
            <person name="Zhang J."/>
            <person name="Zhang Y."/>
            <person name="Li R."/>
            <person name="Xu Z."/>
            <person name="Li S."/>
            <person name="Li X."/>
            <person name="Zheng H."/>
            <person name="Cong L."/>
            <person name="Lin L."/>
            <person name="Yin J."/>
            <person name="Geng J."/>
            <person name="Li G."/>
            <person name="Shi J."/>
            <person name="Liu J."/>
            <person name="Lv H."/>
            <person name="Li J."/>
            <person name="Wang J."/>
            <person name="Deng Y."/>
            <person name="Ran L."/>
            <person name="Shi X."/>
            <person name="Wang X."/>
            <person name="Wu Q."/>
            <person name="Li C."/>
            <person name="Ren X."/>
            <person name="Wang J."/>
            <person name="Wang X."/>
            <person name="Li D."/>
            <person name="Liu D."/>
            <person name="Zhang X."/>
            <person name="Ji Z."/>
            <person name="Zhao W."/>
            <person name="Sun Y."/>
            <person name="Zhang Z."/>
            <person name="Bao J."/>
            <person name="Han Y."/>
            <person name="Dong L."/>
            <person name="Ji J."/>
            <person name="Chen P."/>
            <person name="Wu S."/>
            <person name="Liu J."/>
            <person name="Xiao Y."/>
            <person name="Bu D."/>
            <person name="Tan J."/>
            <person name="Yang L."/>
            <person name="Ye C."/>
            <person name="Zhang J."/>
            <person name="Xu J."/>
            <person name="Zhou Y."/>
            <person name="Yu Y."/>
            <person name="Zhang B."/>
            <person name="Zhuang S."/>
            <person name="Wei H."/>
            <person name="Liu B."/>
            <person name="Lei M."/>
            <person name="Yu H."/>
            <person name="Li Y."/>
            <person name="Xu H."/>
            <person name="Wei S."/>
            <person name="He X."/>
            <person name="Fang L."/>
            <person name="Zhang Z."/>
            <person name="Zhang Y."/>
            <person name="Huang X."/>
            <person name="Su Z."/>
            <person name="Tong W."/>
            <person name="Li J."/>
            <person name="Tong Z."/>
            <person name="Li S."/>
            <person name="Ye J."/>
            <person name="Wang L."/>
            <person name="Fang L."/>
            <person name="Lei T."/>
            <person name="Chen C.-S."/>
            <person name="Chen H.-C."/>
            <person name="Xu Z."/>
            <person name="Li H."/>
            <person name="Huang H."/>
            <person name="Zhang F."/>
            <person name="Xu H."/>
            <person name="Li N."/>
            <person name="Zhao C."/>
            <person name="Li S."/>
            <person name="Dong L."/>
            <person name="Huang Y."/>
            <person name="Li L."/>
            <person name="Xi Y."/>
            <person name="Qi Q."/>
            <person name="Li W."/>
            <person name="Zhang B."/>
            <person name="Hu W."/>
            <person name="Zhang Y."/>
            <person name="Tian X."/>
            <person name="Jiao Y."/>
            <person name="Liang X."/>
            <person name="Jin J."/>
            <person name="Gao L."/>
            <person name="Zheng W."/>
            <person name="Hao B."/>
            <person name="Liu S.-M."/>
            <person name="Wang W."/>
            <person name="Yuan L."/>
            <person name="Cao M."/>
            <person name="McDermott J."/>
            <person name="Samudrala R."/>
            <person name="Wang J."/>
            <person name="Wong G.K.-S."/>
            <person name="Yang H."/>
        </authorList>
    </citation>
    <scope>NUCLEOTIDE SEQUENCE [LARGE SCALE GENOMIC DNA]</scope>
    <source>
        <strain>cv. 93-11</strain>
    </source>
</reference>
<reference key="2">
    <citation type="journal article" date="2008" name="Plant Mol. Biol.">
        <title>A genome-wide survey of HD-Zip genes in rice and analysis of drought-responsive family members.</title>
        <authorList>
            <person name="Agalou A."/>
            <person name="Purwantomo S."/>
            <person name="Oevernaes E."/>
            <person name="Johannesson H."/>
            <person name="Zhu X."/>
            <person name="Estiati A."/>
            <person name="de Kam R.J."/>
            <person name="Engstroem P."/>
            <person name="Slamet-Loedin I.H."/>
            <person name="Zhu Z."/>
            <person name="Wang M."/>
            <person name="Xiong L."/>
            <person name="Meijer A.H."/>
            <person name="Ouwerkerk P.B.F."/>
        </authorList>
    </citation>
    <scope>NUCLEOTIDE SEQUENCE [MRNA] OF 1-140</scope>
    <scope>TISSUE SPECIFICITY</scope>
    <scope>GENE FAMILY</scope>
    <scope>NOMENCLATURE</scope>
    <source>
        <strain>cv. Minghui 86</strain>
    </source>
</reference>
<feature type="chain" id="PRO_0000331727" description="Homeobox-leucine zipper protein HOX28">
    <location>
        <begin position="1"/>
        <end position="256"/>
    </location>
</feature>
<feature type="DNA-binding region" description="Homeobox" evidence="2">
    <location>
        <begin position="91"/>
        <end position="150"/>
    </location>
</feature>
<feature type="region of interest" description="Disordered" evidence="3">
    <location>
        <begin position="56"/>
        <end position="86"/>
    </location>
</feature>
<feature type="region of interest" description="Leucine-zipper">
    <location>
        <begin position="149"/>
        <end position="193"/>
    </location>
</feature>
<feature type="compositionally biased region" description="Low complexity" evidence="3">
    <location>
        <begin position="58"/>
        <end position="67"/>
    </location>
</feature>
<protein>
    <recommendedName>
        <fullName>Homeobox-leucine zipper protein HOX28</fullName>
    </recommendedName>
    <alternativeName>
        <fullName>HD-ZIP protein HOX28</fullName>
    </alternativeName>
    <alternativeName>
        <fullName>Homeodomain transcription factor HOX28</fullName>
    </alternativeName>
    <alternativeName>
        <fullName>OsHox28</fullName>
    </alternativeName>
</protein>
<gene>
    <name type="primary">HOX28</name>
    <name type="ORF">OsI_21569</name>
</gene>
<dbReference type="EMBL" id="CM000131">
    <property type="protein sequence ID" value="EEC79959.1"/>
    <property type="molecule type" value="Genomic_DNA"/>
</dbReference>
<dbReference type="EMBL" id="EF555549">
    <property type="protein sequence ID" value="ABQ57290.1"/>
    <property type="molecule type" value="mRNA"/>
</dbReference>
<dbReference type="SMR" id="A2Y931"/>
<dbReference type="EnsemblPlants" id="BGIOSGA022270-TA">
    <property type="protein sequence ID" value="BGIOSGA022270-PA"/>
    <property type="gene ID" value="BGIOSGA022270"/>
</dbReference>
<dbReference type="EnsemblPlants" id="OsLiXu_Ung0025550.01">
    <property type="protein sequence ID" value="OsLiXu_Ung0025550.01"/>
    <property type="gene ID" value="OsLiXu_Ung0025550"/>
</dbReference>
<dbReference type="EnsemblPlants" id="OsMH63_06G002760_01">
    <property type="protein sequence ID" value="OsMH63_06G002760_01"/>
    <property type="gene ID" value="OsMH63_06G002760"/>
</dbReference>
<dbReference type="EnsemblPlants" id="OsPr106_06g0002800.01">
    <property type="protein sequence ID" value="OsPr106_06g0002800.01"/>
    <property type="gene ID" value="OsPr106_06g0002800"/>
</dbReference>
<dbReference type="Gramene" id="BGIOSGA022270-TA">
    <property type="protein sequence ID" value="BGIOSGA022270-PA"/>
    <property type="gene ID" value="BGIOSGA022270"/>
</dbReference>
<dbReference type="Gramene" id="OsLiXu_Ung0025550.01">
    <property type="protein sequence ID" value="OsLiXu_Ung0025550.01"/>
    <property type="gene ID" value="OsLiXu_Ung0025550"/>
</dbReference>
<dbReference type="Gramene" id="OsMH63_06G002760_01">
    <property type="protein sequence ID" value="OsMH63_06G002760_01"/>
    <property type="gene ID" value="OsMH63_06G002760"/>
</dbReference>
<dbReference type="Gramene" id="OsPr106_06g0002800.01">
    <property type="protein sequence ID" value="OsPr106_06g0002800.01"/>
    <property type="gene ID" value="OsPr106_06g0002800"/>
</dbReference>
<dbReference type="HOGENOM" id="CLU_049516_4_0_1"/>
<dbReference type="OMA" id="AMFPGHP"/>
<dbReference type="Proteomes" id="UP000007015">
    <property type="component" value="Chromosome 6"/>
</dbReference>
<dbReference type="GO" id="GO:0005634">
    <property type="term" value="C:nucleus"/>
    <property type="evidence" value="ECO:0007669"/>
    <property type="project" value="UniProtKB-SubCell"/>
</dbReference>
<dbReference type="GO" id="GO:0000981">
    <property type="term" value="F:DNA-binding transcription factor activity, RNA polymerase II-specific"/>
    <property type="evidence" value="ECO:0007669"/>
    <property type="project" value="InterPro"/>
</dbReference>
<dbReference type="GO" id="GO:0043565">
    <property type="term" value="F:sequence-specific DNA binding"/>
    <property type="evidence" value="ECO:0007669"/>
    <property type="project" value="InterPro"/>
</dbReference>
<dbReference type="CDD" id="cd00086">
    <property type="entry name" value="homeodomain"/>
    <property type="match status" value="1"/>
</dbReference>
<dbReference type="FunFam" id="1.10.10.60:FF:000577">
    <property type="entry name" value="Homeobox-leucine zipper protein 18"/>
    <property type="match status" value="1"/>
</dbReference>
<dbReference type="Gene3D" id="1.10.10.60">
    <property type="entry name" value="Homeodomain-like"/>
    <property type="match status" value="1"/>
</dbReference>
<dbReference type="InterPro" id="IPR001356">
    <property type="entry name" value="HD"/>
</dbReference>
<dbReference type="InterPro" id="IPR050762">
    <property type="entry name" value="HD-ZIP_Homeobox_LZ_Class_II"/>
</dbReference>
<dbReference type="InterPro" id="IPR017970">
    <property type="entry name" value="Homeobox_CS"/>
</dbReference>
<dbReference type="InterPro" id="IPR009057">
    <property type="entry name" value="Homeodomain-like_sf"/>
</dbReference>
<dbReference type="InterPro" id="IPR003106">
    <property type="entry name" value="Leu_zip_homeo"/>
</dbReference>
<dbReference type="PANTHER" id="PTHR45714">
    <property type="entry name" value="HOMEOBOX-LEUCINE ZIPPER PROTEIN HAT14"/>
    <property type="match status" value="1"/>
</dbReference>
<dbReference type="PANTHER" id="PTHR45714:SF18">
    <property type="entry name" value="HOMEOBOX-LEUCINE ZIPPER PROTEIN HOX28"/>
    <property type="match status" value="1"/>
</dbReference>
<dbReference type="Pfam" id="PF02183">
    <property type="entry name" value="HALZ"/>
    <property type="match status" value="1"/>
</dbReference>
<dbReference type="Pfam" id="PF00046">
    <property type="entry name" value="Homeodomain"/>
    <property type="match status" value="1"/>
</dbReference>
<dbReference type="SMART" id="SM00340">
    <property type="entry name" value="HALZ"/>
    <property type="match status" value="1"/>
</dbReference>
<dbReference type="SMART" id="SM00389">
    <property type="entry name" value="HOX"/>
    <property type="match status" value="1"/>
</dbReference>
<dbReference type="SUPFAM" id="SSF46689">
    <property type="entry name" value="Homeodomain-like"/>
    <property type="match status" value="1"/>
</dbReference>
<dbReference type="PROSITE" id="PS00027">
    <property type="entry name" value="HOMEOBOX_1"/>
    <property type="match status" value="1"/>
</dbReference>
<dbReference type="PROSITE" id="PS50071">
    <property type="entry name" value="HOMEOBOX_2"/>
    <property type="match status" value="1"/>
</dbReference>
<keyword id="KW-0238">DNA-binding</keyword>
<keyword id="KW-0371">Homeobox</keyword>
<keyword id="KW-0539">Nucleus</keyword>
<keyword id="KW-1185">Reference proteome</keyword>
<keyword id="KW-0804">Transcription</keyword>
<keyword id="KW-0805">Transcription regulation</keyword>
<sequence length="256" mass="27017">MERQGLDLGLSLGLGLTTAATWPAAGFCLNSGMAEQEVIRRDDVVAATAAEDERFACSPGSPVSSGSGKRGSGSGSGDEVDDAGCDVGGGGARKKLRLSKDQAAVLEECFKTHHTLTPKQKVALAKSLNLRPRQVEVWFQNRRARTKLKQTEVDCEHLKRWCDQLADDNRRLHKELAELRALKATPTPPAAAPPLTTLTMCLSCKRVANAGVPSPAAAIFPGHPQFLCGFRDHAGAASSSYGGASSGLAKAVRAAR</sequence>
<evidence type="ECO:0000250" key="1"/>
<evidence type="ECO:0000255" key="2">
    <source>
        <dbReference type="PROSITE-ProRule" id="PRU00108"/>
    </source>
</evidence>
<evidence type="ECO:0000256" key="3">
    <source>
        <dbReference type="SAM" id="MobiDB-lite"/>
    </source>
</evidence>
<evidence type="ECO:0000269" key="4">
    <source>
    </source>
</evidence>
<evidence type="ECO:0000305" key="5"/>
<proteinExistence type="evidence at transcript level"/>